<name>URK_STRA3</name>
<keyword id="KW-0067">ATP-binding</keyword>
<keyword id="KW-0963">Cytoplasm</keyword>
<keyword id="KW-0418">Kinase</keyword>
<keyword id="KW-0547">Nucleotide-binding</keyword>
<keyword id="KW-0808">Transferase</keyword>
<protein>
    <recommendedName>
        <fullName evidence="1">Uridine kinase</fullName>
        <ecNumber evidence="1">2.7.1.48</ecNumber>
    </recommendedName>
    <alternativeName>
        <fullName evidence="1">Cytidine monophosphokinase</fullName>
    </alternativeName>
    <alternativeName>
        <fullName evidence="1">Uridine monophosphokinase</fullName>
    </alternativeName>
</protein>
<proteinExistence type="inferred from homology"/>
<sequence length="209" mass="24203">MRKKPIIIGVTGGSGGGKTSVSRAILSNFPDQKITMIEHDSYYKDQSHLTFEERVKTNYDHPLAFDTNLMIEQLNELIEGRPVDIPVYDYTKHTRSDRTIRQDPQDVIIVEGILVLEDQRLRDLMDIKLFVDTDDDIRIIRRIKRDMEERDRSLDSIIEQYTEVVKPMYHQFIEPTKRYADIVIPEGVSNIVAIDLINTKVASILNEAK</sequence>
<organism>
    <name type="scientific">Streptococcus agalactiae serotype III (strain NEM316)</name>
    <dbReference type="NCBI Taxonomy" id="211110"/>
    <lineage>
        <taxon>Bacteria</taxon>
        <taxon>Bacillati</taxon>
        <taxon>Bacillota</taxon>
        <taxon>Bacilli</taxon>
        <taxon>Lactobacillales</taxon>
        <taxon>Streptococcaceae</taxon>
        <taxon>Streptococcus</taxon>
    </lineage>
</organism>
<evidence type="ECO:0000255" key="1">
    <source>
        <dbReference type="HAMAP-Rule" id="MF_00551"/>
    </source>
</evidence>
<comment type="catalytic activity">
    <reaction evidence="1">
        <text>uridine + ATP = UMP + ADP + H(+)</text>
        <dbReference type="Rhea" id="RHEA:16825"/>
        <dbReference type="ChEBI" id="CHEBI:15378"/>
        <dbReference type="ChEBI" id="CHEBI:16704"/>
        <dbReference type="ChEBI" id="CHEBI:30616"/>
        <dbReference type="ChEBI" id="CHEBI:57865"/>
        <dbReference type="ChEBI" id="CHEBI:456216"/>
        <dbReference type="EC" id="2.7.1.48"/>
    </reaction>
</comment>
<comment type="catalytic activity">
    <reaction evidence="1">
        <text>cytidine + ATP = CMP + ADP + H(+)</text>
        <dbReference type="Rhea" id="RHEA:24674"/>
        <dbReference type="ChEBI" id="CHEBI:15378"/>
        <dbReference type="ChEBI" id="CHEBI:17562"/>
        <dbReference type="ChEBI" id="CHEBI:30616"/>
        <dbReference type="ChEBI" id="CHEBI:60377"/>
        <dbReference type="ChEBI" id="CHEBI:456216"/>
        <dbReference type="EC" id="2.7.1.48"/>
    </reaction>
</comment>
<comment type="pathway">
    <text evidence="1">Pyrimidine metabolism; CTP biosynthesis via salvage pathway; CTP from cytidine: step 1/3.</text>
</comment>
<comment type="pathway">
    <text evidence="1">Pyrimidine metabolism; UMP biosynthesis via salvage pathway; UMP from uridine: step 1/1.</text>
</comment>
<comment type="subcellular location">
    <subcellularLocation>
        <location evidence="1">Cytoplasm</location>
    </subcellularLocation>
</comment>
<comment type="similarity">
    <text evidence="1">Belongs to the uridine kinase family.</text>
</comment>
<gene>
    <name evidence="1" type="primary">udk</name>
    <name type="ordered locus">gbs0844</name>
</gene>
<reference key="1">
    <citation type="journal article" date="2002" name="Mol. Microbiol.">
        <title>Genome sequence of Streptococcus agalactiae, a pathogen causing invasive neonatal disease.</title>
        <authorList>
            <person name="Glaser P."/>
            <person name="Rusniok C."/>
            <person name="Buchrieser C."/>
            <person name="Chevalier F."/>
            <person name="Frangeul L."/>
            <person name="Msadek T."/>
            <person name="Zouine M."/>
            <person name="Couve E."/>
            <person name="Lalioui L."/>
            <person name="Poyart C."/>
            <person name="Trieu-Cuot P."/>
            <person name="Kunst F."/>
        </authorList>
    </citation>
    <scope>NUCLEOTIDE SEQUENCE [LARGE SCALE GENOMIC DNA]</scope>
    <source>
        <strain>NEM316</strain>
    </source>
</reference>
<dbReference type="EC" id="2.7.1.48" evidence="1"/>
<dbReference type="EMBL" id="AL766847">
    <property type="protein sequence ID" value="CAD46488.1"/>
    <property type="molecule type" value="Genomic_DNA"/>
</dbReference>
<dbReference type="RefSeq" id="WP_001227821.1">
    <property type="nucleotide sequence ID" value="NC_004368.1"/>
</dbReference>
<dbReference type="SMR" id="Q8E5Y5"/>
<dbReference type="KEGG" id="san:gbs0844"/>
<dbReference type="eggNOG" id="COG0572">
    <property type="taxonomic scope" value="Bacteria"/>
</dbReference>
<dbReference type="HOGENOM" id="CLU_021278_1_2_9"/>
<dbReference type="UniPathway" id="UPA00574">
    <property type="reaction ID" value="UER00637"/>
</dbReference>
<dbReference type="UniPathway" id="UPA00579">
    <property type="reaction ID" value="UER00640"/>
</dbReference>
<dbReference type="Proteomes" id="UP000000823">
    <property type="component" value="Chromosome"/>
</dbReference>
<dbReference type="GO" id="GO:0005737">
    <property type="term" value="C:cytoplasm"/>
    <property type="evidence" value="ECO:0007669"/>
    <property type="project" value="UniProtKB-SubCell"/>
</dbReference>
<dbReference type="GO" id="GO:0005524">
    <property type="term" value="F:ATP binding"/>
    <property type="evidence" value="ECO:0007669"/>
    <property type="project" value="UniProtKB-UniRule"/>
</dbReference>
<dbReference type="GO" id="GO:0043771">
    <property type="term" value="F:cytidine kinase activity"/>
    <property type="evidence" value="ECO:0007669"/>
    <property type="project" value="RHEA"/>
</dbReference>
<dbReference type="GO" id="GO:0004849">
    <property type="term" value="F:uridine kinase activity"/>
    <property type="evidence" value="ECO:0007669"/>
    <property type="project" value="UniProtKB-UniRule"/>
</dbReference>
<dbReference type="GO" id="GO:0044211">
    <property type="term" value="P:CTP salvage"/>
    <property type="evidence" value="ECO:0007669"/>
    <property type="project" value="UniProtKB-UniRule"/>
</dbReference>
<dbReference type="GO" id="GO:0044206">
    <property type="term" value="P:UMP salvage"/>
    <property type="evidence" value="ECO:0007669"/>
    <property type="project" value="UniProtKB-UniRule"/>
</dbReference>
<dbReference type="CDD" id="cd02023">
    <property type="entry name" value="UMPK"/>
    <property type="match status" value="1"/>
</dbReference>
<dbReference type="Gene3D" id="3.40.50.300">
    <property type="entry name" value="P-loop containing nucleotide triphosphate hydrolases"/>
    <property type="match status" value="1"/>
</dbReference>
<dbReference type="HAMAP" id="MF_00551">
    <property type="entry name" value="Uridine_kinase"/>
    <property type="match status" value="1"/>
</dbReference>
<dbReference type="InterPro" id="IPR027417">
    <property type="entry name" value="P-loop_NTPase"/>
</dbReference>
<dbReference type="InterPro" id="IPR006083">
    <property type="entry name" value="PRK/URK"/>
</dbReference>
<dbReference type="InterPro" id="IPR026008">
    <property type="entry name" value="Uridine_kinase"/>
</dbReference>
<dbReference type="InterPro" id="IPR000764">
    <property type="entry name" value="Uridine_kinase-like"/>
</dbReference>
<dbReference type="NCBIfam" id="NF004018">
    <property type="entry name" value="PRK05480.1"/>
    <property type="match status" value="1"/>
</dbReference>
<dbReference type="NCBIfam" id="TIGR00235">
    <property type="entry name" value="udk"/>
    <property type="match status" value="1"/>
</dbReference>
<dbReference type="PANTHER" id="PTHR10285">
    <property type="entry name" value="URIDINE KINASE"/>
    <property type="match status" value="1"/>
</dbReference>
<dbReference type="Pfam" id="PF00485">
    <property type="entry name" value="PRK"/>
    <property type="match status" value="1"/>
</dbReference>
<dbReference type="PRINTS" id="PR00988">
    <property type="entry name" value="URIDINKINASE"/>
</dbReference>
<dbReference type="SUPFAM" id="SSF52540">
    <property type="entry name" value="P-loop containing nucleoside triphosphate hydrolases"/>
    <property type="match status" value="1"/>
</dbReference>
<feature type="chain" id="PRO_1000017906" description="Uridine kinase">
    <location>
        <begin position="1"/>
        <end position="209"/>
    </location>
</feature>
<feature type="binding site" evidence="1">
    <location>
        <begin position="12"/>
        <end position="19"/>
    </location>
    <ligand>
        <name>ATP</name>
        <dbReference type="ChEBI" id="CHEBI:30616"/>
    </ligand>
</feature>
<accession>Q8E5Y5</accession>